<evidence type="ECO:0000255" key="1">
    <source>
        <dbReference type="HAMAP-Rule" id="MF_00599"/>
    </source>
</evidence>
<accession>A3N0G1</accession>
<proteinExistence type="inferred from homology"/>
<sequence>MRVLIVFFAFLLAFFQYSFWFGKNGWSDYQEAQTAVERLKDENTKLEARNNLIAAEINDLKTGVNALEERARFEREMVKSDETFYRIVPRNQ</sequence>
<organism>
    <name type="scientific">Actinobacillus pleuropneumoniae serotype 5b (strain L20)</name>
    <dbReference type="NCBI Taxonomy" id="416269"/>
    <lineage>
        <taxon>Bacteria</taxon>
        <taxon>Pseudomonadati</taxon>
        <taxon>Pseudomonadota</taxon>
        <taxon>Gammaproteobacteria</taxon>
        <taxon>Pasteurellales</taxon>
        <taxon>Pasteurellaceae</taxon>
        <taxon>Actinobacillus</taxon>
    </lineage>
</organism>
<gene>
    <name evidence="1" type="primary">ftsB</name>
    <name type="ordered locus">APL_0801</name>
</gene>
<feature type="chain" id="PRO_1000025685" description="Cell division protein FtsB">
    <location>
        <begin position="1"/>
        <end position="92"/>
    </location>
</feature>
<feature type="topological domain" description="Cytoplasmic" evidence="1">
    <location>
        <begin position="1"/>
        <end position="3"/>
    </location>
</feature>
<feature type="transmembrane region" description="Helical" evidence="1">
    <location>
        <begin position="4"/>
        <end position="21"/>
    </location>
</feature>
<feature type="topological domain" description="Periplasmic" evidence="1">
    <location>
        <begin position="22"/>
        <end position="92"/>
    </location>
</feature>
<feature type="coiled-coil region" evidence="1">
    <location>
        <begin position="27"/>
        <end position="76"/>
    </location>
</feature>
<name>FTSB_ACTP2</name>
<protein>
    <recommendedName>
        <fullName evidence="1">Cell division protein FtsB</fullName>
    </recommendedName>
</protein>
<dbReference type="EMBL" id="CP000569">
    <property type="protein sequence ID" value="ABN73897.1"/>
    <property type="molecule type" value="Genomic_DNA"/>
</dbReference>
<dbReference type="RefSeq" id="WP_005597256.1">
    <property type="nucleotide sequence ID" value="NC_009053.1"/>
</dbReference>
<dbReference type="SMR" id="A3N0G1"/>
<dbReference type="STRING" id="416269.APL_0801"/>
<dbReference type="EnsemblBacteria" id="ABN73897">
    <property type="protein sequence ID" value="ABN73897"/>
    <property type="gene ID" value="APL_0801"/>
</dbReference>
<dbReference type="GeneID" id="48598985"/>
<dbReference type="KEGG" id="apl:APL_0801"/>
<dbReference type="eggNOG" id="COG2919">
    <property type="taxonomic scope" value="Bacteria"/>
</dbReference>
<dbReference type="HOGENOM" id="CLU_134863_5_2_6"/>
<dbReference type="Proteomes" id="UP000001432">
    <property type="component" value="Chromosome"/>
</dbReference>
<dbReference type="GO" id="GO:0032153">
    <property type="term" value="C:cell division site"/>
    <property type="evidence" value="ECO:0007669"/>
    <property type="project" value="UniProtKB-UniRule"/>
</dbReference>
<dbReference type="GO" id="GO:0030428">
    <property type="term" value="C:cell septum"/>
    <property type="evidence" value="ECO:0007669"/>
    <property type="project" value="TreeGrafter"/>
</dbReference>
<dbReference type="GO" id="GO:0005886">
    <property type="term" value="C:plasma membrane"/>
    <property type="evidence" value="ECO:0007669"/>
    <property type="project" value="UniProtKB-SubCell"/>
</dbReference>
<dbReference type="GO" id="GO:0043093">
    <property type="term" value="P:FtsZ-dependent cytokinesis"/>
    <property type="evidence" value="ECO:0007669"/>
    <property type="project" value="UniProtKB-UniRule"/>
</dbReference>
<dbReference type="HAMAP" id="MF_00599">
    <property type="entry name" value="FtsB"/>
    <property type="match status" value="1"/>
</dbReference>
<dbReference type="InterPro" id="IPR023081">
    <property type="entry name" value="Cell_div_FtsB"/>
</dbReference>
<dbReference type="InterPro" id="IPR007060">
    <property type="entry name" value="FtsL/DivIC"/>
</dbReference>
<dbReference type="NCBIfam" id="NF002058">
    <property type="entry name" value="PRK00888.1"/>
    <property type="match status" value="1"/>
</dbReference>
<dbReference type="PANTHER" id="PTHR37485">
    <property type="entry name" value="CELL DIVISION PROTEIN FTSB"/>
    <property type="match status" value="1"/>
</dbReference>
<dbReference type="PANTHER" id="PTHR37485:SF1">
    <property type="entry name" value="CELL DIVISION PROTEIN FTSB"/>
    <property type="match status" value="1"/>
</dbReference>
<dbReference type="Pfam" id="PF04977">
    <property type="entry name" value="DivIC"/>
    <property type="match status" value="1"/>
</dbReference>
<reference key="1">
    <citation type="journal article" date="2008" name="J. Bacteriol.">
        <title>The complete genome sequence of Actinobacillus pleuropneumoniae L20 (serotype 5b).</title>
        <authorList>
            <person name="Foote S.J."/>
            <person name="Bosse J.T."/>
            <person name="Bouevitch A.B."/>
            <person name="Langford P.R."/>
            <person name="Young N.M."/>
            <person name="Nash J.H.E."/>
        </authorList>
    </citation>
    <scope>NUCLEOTIDE SEQUENCE [LARGE SCALE GENOMIC DNA]</scope>
    <source>
        <strain>L20</strain>
    </source>
</reference>
<keyword id="KW-0131">Cell cycle</keyword>
<keyword id="KW-0132">Cell division</keyword>
<keyword id="KW-0997">Cell inner membrane</keyword>
<keyword id="KW-1003">Cell membrane</keyword>
<keyword id="KW-0175">Coiled coil</keyword>
<keyword id="KW-0472">Membrane</keyword>
<keyword id="KW-1185">Reference proteome</keyword>
<keyword id="KW-0812">Transmembrane</keyword>
<keyword id="KW-1133">Transmembrane helix</keyword>
<comment type="function">
    <text evidence="1">Essential cell division protein. May link together the upstream cell division proteins, which are predominantly cytoplasmic, with the downstream cell division proteins, which are predominantly periplasmic.</text>
</comment>
<comment type="subunit">
    <text evidence="1">Part of a complex composed of FtsB, FtsL and FtsQ.</text>
</comment>
<comment type="subcellular location">
    <subcellularLocation>
        <location evidence="1">Cell inner membrane</location>
        <topology evidence="1">Single-pass type II membrane protein</topology>
    </subcellularLocation>
    <text evidence="1">Localizes to the division septum.</text>
</comment>
<comment type="similarity">
    <text evidence="1">Belongs to the FtsB family.</text>
</comment>